<dbReference type="EMBL" id="AP009240">
    <property type="protein sequence ID" value="BAG75566.1"/>
    <property type="molecule type" value="Genomic_DNA"/>
</dbReference>
<dbReference type="RefSeq" id="WP_000692206.1">
    <property type="nucleotide sequence ID" value="NC_011415.1"/>
</dbReference>
<dbReference type="SMR" id="B6HYZ2"/>
<dbReference type="KEGG" id="ecy:ECSE_0042"/>
<dbReference type="HOGENOM" id="CLU_060196_2_2_6"/>
<dbReference type="UniPathway" id="UPA00117"/>
<dbReference type="Proteomes" id="UP000008199">
    <property type="component" value="Chromosome"/>
</dbReference>
<dbReference type="GO" id="GO:0009055">
    <property type="term" value="F:electron transfer activity"/>
    <property type="evidence" value="ECO:0007669"/>
    <property type="project" value="InterPro"/>
</dbReference>
<dbReference type="GO" id="GO:0009437">
    <property type="term" value="P:carnitine metabolic process"/>
    <property type="evidence" value="ECO:0007669"/>
    <property type="project" value="UniProtKB-UniRule"/>
</dbReference>
<dbReference type="CDD" id="cd01714">
    <property type="entry name" value="ETF_beta"/>
    <property type="match status" value="1"/>
</dbReference>
<dbReference type="FunFam" id="3.40.50.620:FF:000072">
    <property type="entry name" value="Protein FixA homolog"/>
    <property type="match status" value="1"/>
</dbReference>
<dbReference type="Gene3D" id="3.40.50.620">
    <property type="entry name" value="HUPs"/>
    <property type="match status" value="1"/>
</dbReference>
<dbReference type="HAMAP" id="MF_01055">
    <property type="entry name" value="FixA"/>
    <property type="match status" value="1"/>
</dbReference>
<dbReference type="InterPro" id="IPR000049">
    <property type="entry name" value="ET-Flavoprotein_bsu_CS"/>
</dbReference>
<dbReference type="InterPro" id="IPR014730">
    <property type="entry name" value="ETF_a/b_N"/>
</dbReference>
<dbReference type="InterPro" id="IPR012255">
    <property type="entry name" value="ETF_b"/>
</dbReference>
<dbReference type="InterPro" id="IPR033948">
    <property type="entry name" value="ETF_beta_N"/>
</dbReference>
<dbReference type="InterPro" id="IPR023463">
    <property type="entry name" value="FixA"/>
</dbReference>
<dbReference type="InterPro" id="IPR014729">
    <property type="entry name" value="Rossmann-like_a/b/a_fold"/>
</dbReference>
<dbReference type="NCBIfam" id="NF002888">
    <property type="entry name" value="PRK03359.1"/>
    <property type="match status" value="1"/>
</dbReference>
<dbReference type="PANTHER" id="PTHR21294">
    <property type="entry name" value="ELECTRON TRANSFER FLAVOPROTEIN BETA-SUBUNIT"/>
    <property type="match status" value="1"/>
</dbReference>
<dbReference type="PANTHER" id="PTHR21294:SF17">
    <property type="entry name" value="PROTEIN FIXA"/>
    <property type="match status" value="1"/>
</dbReference>
<dbReference type="Pfam" id="PF01012">
    <property type="entry name" value="ETF"/>
    <property type="match status" value="1"/>
</dbReference>
<dbReference type="PIRSF" id="PIRSF000090">
    <property type="entry name" value="Beta-ETF"/>
    <property type="match status" value="1"/>
</dbReference>
<dbReference type="SMART" id="SM00893">
    <property type="entry name" value="ETF"/>
    <property type="match status" value="1"/>
</dbReference>
<dbReference type="SUPFAM" id="SSF52402">
    <property type="entry name" value="Adenine nucleotide alpha hydrolases-like"/>
    <property type="match status" value="1"/>
</dbReference>
<dbReference type="PROSITE" id="PS01065">
    <property type="entry name" value="ETF_BETA"/>
    <property type="match status" value="1"/>
</dbReference>
<comment type="function">
    <text evidence="1">Required for anaerobic carnitine reduction. May bring reductant to CaiA.</text>
</comment>
<comment type="pathway">
    <text evidence="1">Amine and polyamine metabolism; carnitine metabolism.</text>
</comment>
<comment type="subunit">
    <text evidence="1">Heterodimer of FixA and FixB.</text>
</comment>
<comment type="similarity">
    <text evidence="1">Belongs to the ETF beta-subunit/FixA family.</text>
</comment>
<proteinExistence type="inferred from homology"/>
<accession>B6HYZ2</accession>
<keyword id="KW-0249">Electron transport</keyword>
<keyword id="KW-0813">Transport</keyword>
<gene>
    <name evidence="1" type="primary">fixA</name>
    <name type="ordered locus">ECSE_0042</name>
</gene>
<evidence type="ECO:0000255" key="1">
    <source>
        <dbReference type="HAMAP-Rule" id="MF_01055"/>
    </source>
</evidence>
<feature type="chain" id="PRO_1000136319" description="Protein FixA">
    <location>
        <begin position="1"/>
        <end position="256"/>
    </location>
</feature>
<protein>
    <recommendedName>
        <fullName evidence="1">Protein FixA</fullName>
    </recommendedName>
</protein>
<name>FIXA_ECOSE</name>
<organism>
    <name type="scientific">Escherichia coli (strain SE11)</name>
    <dbReference type="NCBI Taxonomy" id="409438"/>
    <lineage>
        <taxon>Bacteria</taxon>
        <taxon>Pseudomonadati</taxon>
        <taxon>Pseudomonadota</taxon>
        <taxon>Gammaproteobacteria</taxon>
        <taxon>Enterobacterales</taxon>
        <taxon>Enterobacteriaceae</taxon>
        <taxon>Escherichia</taxon>
    </lineage>
</organism>
<sequence length="256" mass="27158">MKIITCYKCVPDEQDIAVNNADGSLDFSKADAKISQYDLNAIEAACQLKQQAAEAQVTALSVGGKALTNAKGRKDVLSRGPDELIVVIDDQFEQALPQQTASALAAAAQKAGFDLILCGDGSSDLYAQQVGLLVGEILNIPAVNGVSKIISLTADTLTVERELEDETETLSIPLPAVVAVSTDINSPQIPSMKAILGAAKKPVQVWSAADIGFNAVDAWSEQQVAAPKQRERQRIVIEGDGEEQIAAFAENLRKVI</sequence>
<reference key="1">
    <citation type="journal article" date="2008" name="DNA Res.">
        <title>Complete genome sequence and comparative analysis of the wild-type commensal Escherichia coli strain SE11 isolated from a healthy adult.</title>
        <authorList>
            <person name="Oshima K."/>
            <person name="Toh H."/>
            <person name="Ogura Y."/>
            <person name="Sasamoto H."/>
            <person name="Morita H."/>
            <person name="Park S.-H."/>
            <person name="Ooka T."/>
            <person name="Iyoda S."/>
            <person name="Taylor T.D."/>
            <person name="Hayashi T."/>
            <person name="Itoh K."/>
            <person name="Hattori M."/>
        </authorList>
    </citation>
    <scope>NUCLEOTIDE SEQUENCE [LARGE SCALE GENOMIC DNA]</scope>
    <source>
        <strain>SE11</strain>
    </source>
</reference>